<name>MRAY_BEII9</name>
<protein>
    <recommendedName>
        <fullName evidence="1">Phospho-N-acetylmuramoyl-pentapeptide-transferase</fullName>
        <ecNumber evidence="1">2.7.8.13</ecNumber>
    </recommendedName>
    <alternativeName>
        <fullName evidence="1">UDP-MurNAc-pentapeptide phosphotransferase</fullName>
    </alternativeName>
</protein>
<sequence>MLTWLAEFAVYFTPLNLFRYITFRTGGAIATALFFVFFFGPNIIKSLRIKQGKGQPIRSDGPQSHLLTKKGTPTMGGLMILSGLFVSTLLWANLSNHYVWVVLWVMLGYGAIGFYDDYLKVTKQTHNGFSGRGRLACEAGVALVACIAMMKLGTPHMTSLAFPAVNGYVVDLGLFFLIFGPFVIVASGNAVNLTDGLDGLAIVPVMIAAGTFGIIAYLVGNAIYSDYLRINFVPGAGELAVVSGAVIGAGLGFLWFNAPPAQIFMGDTGSLALGGLLGTIAVAIKHEMVLAIVGGLFALETLSVIVQVVSFKLTGKRVFKMAPIHHHFEQLGWSEPQVVVRFWIIAFVLALVGLSTLKLR</sequence>
<dbReference type="EC" id="2.7.8.13" evidence="1"/>
<dbReference type="EMBL" id="CP001016">
    <property type="protein sequence ID" value="ACB94339.1"/>
    <property type="molecule type" value="Genomic_DNA"/>
</dbReference>
<dbReference type="RefSeq" id="WP_012383697.1">
    <property type="nucleotide sequence ID" value="NC_010581.1"/>
</dbReference>
<dbReference type="SMR" id="B2IGF7"/>
<dbReference type="STRING" id="395963.Bind_0689"/>
<dbReference type="KEGG" id="bid:Bind_0689"/>
<dbReference type="eggNOG" id="COG0472">
    <property type="taxonomic scope" value="Bacteria"/>
</dbReference>
<dbReference type="HOGENOM" id="CLU_023982_0_0_5"/>
<dbReference type="OrthoDB" id="9805475at2"/>
<dbReference type="UniPathway" id="UPA00219"/>
<dbReference type="Proteomes" id="UP000001695">
    <property type="component" value="Chromosome"/>
</dbReference>
<dbReference type="GO" id="GO:0005886">
    <property type="term" value="C:plasma membrane"/>
    <property type="evidence" value="ECO:0007669"/>
    <property type="project" value="UniProtKB-SubCell"/>
</dbReference>
<dbReference type="GO" id="GO:0046872">
    <property type="term" value="F:metal ion binding"/>
    <property type="evidence" value="ECO:0007669"/>
    <property type="project" value="UniProtKB-KW"/>
</dbReference>
<dbReference type="GO" id="GO:0008963">
    <property type="term" value="F:phospho-N-acetylmuramoyl-pentapeptide-transferase activity"/>
    <property type="evidence" value="ECO:0007669"/>
    <property type="project" value="UniProtKB-UniRule"/>
</dbReference>
<dbReference type="GO" id="GO:0051992">
    <property type="term" value="F:UDP-N-acetylmuramoyl-L-alanyl-D-glutamyl-meso-2,6-diaminopimelyl-D-alanyl-D-alanine:undecaprenyl-phosphate transferase activity"/>
    <property type="evidence" value="ECO:0007669"/>
    <property type="project" value="RHEA"/>
</dbReference>
<dbReference type="GO" id="GO:0051301">
    <property type="term" value="P:cell division"/>
    <property type="evidence" value="ECO:0007669"/>
    <property type="project" value="UniProtKB-KW"/>
</dbReference>
<dbReference type="GO" id="GO:0071555">
    <property type="term" value="P:cell wall organization"/>
    <property type="evidence" value="ECO:0007669"/>
    <property type="project" value="UniProtKB-KW"/>
</dbReference>
<dbReference type="GO" id="GO:0009252">
    <property type="term" value="P:peptidoglycan biosynthetic process"/>
    <property type="evidence" value="ECO:0007669"/>
    <property type="project" value="UniProtKB-UniRule"/>
</dbReference>
<dbReference type="GO" id="GO:0008360">
    <property type="term" value="P:regulation of cell shape"/>
    <property type="evidence" value="ECO:0007669"/>
    <property type="project" value="UniProtKB-KW"/>
</dbReference>
<dbReference type="CDD" id="cd06852">
    <property type="entry name" value="GT_MraY"/>
    <property type="match status" value="1"/>
</dbReference>
<dbReference type="HAMAP" id="MF_00038">
    <property type="entry name" value="MraY"/>
    <property type="match status" value="1"/>
</dbReference>
<dbReference type="InterPro" id="IPR000715">
    <property type="entry name" value="Glycosyl_transferase_4"/>
</dbReference>
<dbReference type="InterPro" id="IPR003524">
    <property type="entry name" value="PNAcMuramoyl-5peptid_Trfase"/>
</dbReference>
<dbReference type="InterPro" id="IPR018480">
    <property type="entry name" value="PNAcMuramoyl-5peptid_Trfase_CS"/>
</dbReference>
<dbReference type="NCBIfam" id="TIGR00445">
    <property type="entry name" value="mraY"/>
    <property type="match status" value="1"/>
</dbReference>
<dbReference type="PANTHER" id="PTHR22926">
    <property type="entry name" value="PHOSPHO-N-ACETYLMURAMOYL-PENTAPEPTIDE-TRANSFERASE"/>
    <property type="match status" value="1"/>
</dbReference>
<dbReference type="PANTHER" id="PTHR22926:SF5">
    <property type="entry name" value="PHOSPHO-N-ACETYLMURAMOYL-PENTAPEPTIDE-TRANSFERASE HOMOLOG"/>
    <property type="match status" value="1"/>
</dbReference>
<dbReference type="Pfam" id="PF00953">
    <property type="entry name" value="Glycos_transf_4"/>
    <property type="match status" value="1"/>
</dbReference>
<dbReference type="Pfam" id="PF10555">
    <property type="entry name" value="MraY_sig1"/>
    <property type="match status" value="1"/>
</dbReference>
<dbReference type="PROSITE" id="PS01347">
    <property type="entry name" value="MRAY_1"/>
    <property type="match status" value="1"/>
</dbReference>
<dbReference type="PROSITE" id="PS01348">
    <property type="entry name" value="MRAY_2"/>
    <property type="match status" value="1"/>
</dbReference>
<organism>
    <name type="scientific">Beijerinckia indica subsp. indica (strain ATCC 9039 / DSM 1715 / NCIMB 8712)</name>
    <dbReference type="NCBI Taxonomy" id="395963"/>
    <lineage>
        <taxon>Bacteria</taxon>
        <taxon>Pseudomonadati</taxon>
        <taxon>Pseudomonadota</taxon>
        <taxon>Alphaproteobacteria</taxon>
        <taxon>Hyphomicrobiales</taxon>
        <taxon>Beijerinckiaceae</taxon>
        <taxon>Beijerinckia</taxon>
    </lineage>
</organism>
<feature type="chain" id="PRO_1000090592" description="Phospho-N-acetylmuramoyl-pentapeptide-transferase">
    <location>
        <begin position="1"/>
        <end position="360"/>
    </location>
</feature>
<feature type="transmembrane region" description="Helical" evidence="1">
    <location>
        <begin position="27"/>
        <end position="47"/>
    </location>
</feature>
<feature type="transmembrane region" description="Helical" evidence="1">
    <location>
        <begin position="72"/>
        <end position="92"/>
    </location>
</feature>
<feature type="transmembrane region" description="Helical" evidence="1">
    <location>
        <begin position="94"/>
        <end position="114"/>
    </location>
</feature>
<feature type="transmembrane region" description="Helical" evidence="1">
    <location>
        <begin position="135"/>
        <end position="155"/>
    </location>
</feature>
<feature type="transmembrane region" description="Helical" evidence="1">
    <location>
        <begin position="167"/>
        <end position="187"/>
    </location>
</feature>
<feature type="transmembrane region" description="Helical" evidence="1">
    <location>
        <begin position="199"/>
        <end position="219"/>
    </location>
</feature>
<feature type="transmembrane region" description="Helical" evidence="1">
    <location>
        <begin position="236"/>
        <end position="256"/>
    </location>
</feature>
<feature type="transmembrane region" description="Helical" evidence="1">
    <location>
        <begin position="263"/>
        <end position="283"/>
    </location>
</feature>
<feature type="transmembrane region" description="Helical" evidence="1">
    <location>
        <begin position="289"/>
        <end position="309"/>
    </location>
</feature>
<feature type="transmembrane region" description="Helical" evidence="1">
    <location>
        <begin position="337"/>
        <end position="357"/>
    </location>
</feature>
<evidence type="ECO:0000255" key="1">
    <source>
        <dbReference type="HAMAP-Rule" id="MF_00038"/>
    </source>
</evidence>
<gene>
    <name evidence="1" type="primary">mraY</name>
    <name type="ordered locus">Bind_0689</name>
</gene>
<comment type="function">
    <text evidence="1">Catalyzes the initial step of the lipid cycle reactions in the biosynthesis of the cell wall peptidoglycan: transfers peptidoglycan precursor phospho-MurNAc-pentapeptide from UDP-MurNAc-pentapeptide onto the lipid carrier undecaprenyl phosphate, yielding undecaprenyl-pyrophosphoryl-MurNAc-pentapeptide, known as lipid I.</text>
</comment>
<comment type="catalytic activity">
    <reaction evidence="1">
        <text>UDP-N-acetyl-alpha-D-muramoyl-L-alanyl-gamma-D-glutamyl-meso-2,6-diaminopimeloyl-D-alanyl-D-alanine + di-trans,octa-cis-undecaprenyl phosphate = di-trans,octa-cis-undecaprenyl diphospho-N-acetyl-alpha-D-muramoyl-L-alanyl-D-glutamyl-meso-2,6-diaminopimeloyl-D-alanyl-D-alanine + UMP</text>
        <dbReference type="Rhea" id="RHEA:28386"/>
        <dbReference type="ChEBI" id="CHEBI:57865"/>
        <dbReference type="ChEBI" id="CHEBI:60392"/>
        <dbReference type="ChEBI" id="CHEBI:61386"/>
        <dbReference type="ChEBI" id="CHEBI:61387"/>
        <dbReference type="EC" id="2.7.8.13"/>
    </reaction>
</comment>
<comment type="cofactor">
    <cofactor evidence="1">
        <name>Mg(2+)</name>
        <dbReference type="ChEBI" id="CHEBI:18420"/>
    </cofactor>
</comment>
<comment type="pathway">
    <text evidence="1">Cell wall biogenesis; peptidoglycan biosynthesis.</text>
</comment>
<comment type="subcellular location">
    <subcellularLocation>
        <location evidence="1">Cell inner membrane</location>
        <topology evidence="1">Multi-pass membrane protein</topology>
    </subcellularLocation>
</comment>
<comment type="similarity">
    <text evidence="1">Belongs to the glycosyltransferase 4 family. MraY subfamily.</text>
</comment>
<reference key="1">
    <citation type="journal article" date="2010" name="J. Bacteriol.">
        <title>Complete genome sequence of Beijerinckia indica subsp. indica.</title>
        <authorList>
            <person name="Tamas I."/>
            <person name="Dedysh S.N."/>
            <person name="Liesack W."/>
            <person name="Stott M.B."/>
            <person name="Alam M."/>
            <person name="Murrell J.C."/>
            <person name="Dunfield P.F."/>
        </authorList>
    </citation>
    <scope>NUCLEOTIDE SEQUENCE [LARGE SCALE GENOMIC DNA]</scope>
    <source>
        <strain>ATCC 9039 / DSM 1715 / NCIMB 8712</strain>
    </source>
</reference>
<accession>B2IGF7</accession>
<keyword id="KW-0131">Cell cycle</keyword>
<keyword id="KW-0132">Cell division</keyword>
<keyword id="KW-0997">Cell inner membrane</keyword>
<keyword id="KW-1003">Cell membrane</keyword>
<keyword id="KW-0133">Cell shape</keyword>
<keyword id="KW-0961">Cell wall biogenesis/degradation</keyword>
<keyword id="KW-0460">Magnesium</keyword>
<keyword id="KW-0472">Membrane</keyword>
<keyword id="KW-0479">Metal-binding</keyword>
<keyword id="KW-0573">Peptidoglycan synthesis</keyword>
<keyword id="KW-1185">Reference proteome</keyword>
<keyword id="KW-0808">Transferase</keyword>
<keyword id="KW-0812">Transmembrane</keyword>
<keyword id="KW-1133">Transmembrane helix</keyword>
<proteinExistence type="inferred from homology"/>